<feature type="chain" id="PRO_1000019713" description="Serine--tRNA ligase">
    <location>
        <begin position="1"/>
        <end position="425"/>
    </location>
</feature>
<feature type="binding site" evidence="1">
    <location>
        <begin position="230"/>
        <end position="232"/>
    </location>
    <ligand>
        <name>L-serine</name>
        <dbReference type="ChEBI" id="CHEBI:33384"/>
    </ligand>
</feature>
<feature type="binding site" evidence="1">
    <location>
        <begin position="261"/>
        <end position="263"/>
    </location>
    <ligand>
        <name>ATP</name>
        <dbReference type="ChEBI" id="CHEBI:30616"/>
    </ligand>
</feature>
<feature type="binding site" evidence="1">
    <location>
        <position position="284"/>
    </location>
    <ligand>
        <name>L-serine</name>
        <dbReference type="ChEBI" id="CHEBI:33384"/>
    </ligand>
</feature>
<feature type="binding site" evidence="1">
    <location>
        <begin position="348"/>
        <end position="351"/>
    </location>
    <ligand>
        <name>ATP</name>
        <dbReference type="ChEBI" id="CHEBI:30616"/>
    </ligand>
</feature>
<feature type="binding site" evidence="1">
    <location>
        <position position="383"/>
    </location>
    <ligand>
        <name>L-serine</name>
        <dbReference type="ChEBI" id="CHEBI:33384"/>
    </ligand>
</feature>
<protein>
    <recommendedName>
        <fullName evidence="1">Serine--tRNA ligase</fullName>
        <ecNumber evidence="1">6.1.1.11</ecNumber>
    </recommendedName>
    <alternativeName>
        <fullName evidence="1">Seryl-tRNA synthetase</fullName>
        <shortName evidence="1">SerRS</shortName>
    </alternativeName>
    <alternativeName>
        <fullName evidence="1">Seryl-tRNA(Ser/Sec) synthetase</fullName>
    </alternativeName>
</protein>
<gene>
    <name evidence="1" type="primary">serS</name>
    <name type="ordered locus">LSL_0189</name>
</gene>
<name>SYS_LIGS1</name>
<comment type="function">
    <text evidence="1">Catalyzes the attachment of serine to tRNA(Ser). Is also able to aminoacylate tRNA(Sec) with serine, to form the misacylated tRNA L-seryl-tRNA(Sec), which will be further converted into selenocysteinyl-tRNA(Sec).</text>
</comment>
<comment type="catalytic activity">
    <reaction evidence="1">
        <text>tRNA(Ser) + L-serine + ATP = L-seryl-tRNA(Ser) + AMP + diphosphate + H(+)</text>
        <dbReference type="Rhea" id="RHEA:12292"/>
        <dbReference type="Rhea" id="RHEA-COMP:9669"/>
        <dbReference type="Rhea" id="RHEA-COMP:9703"/>
        <dbReference type="ChEBI" id="CHEBI:15378"/>
        <dbReference type="ChEBI" id="CHEBI:30616"/>
        <dbReference type="ChEBI" id="CHEBI:33019"/>
        <dbReference type="ChEBI" id="CHEBI:33384"/>
        <dbReference type="ChEBI" id="CHEBI:78442"/>
        <dbReference type="ChEBI" id="CHEBI:78533"/>
        <dbReference type="ChEBI" id="CHEBI:456215"/>
        <dbReference type="EC" id="6.1.1.11"/>
    </reaction>
</comment>
<comment type="catalytic activity">
    <reaction evidence="1">
        <text>tRNA(Sec) + L-serine + ATP = L-seryl-tRNA(Sec) + AMP + diphosphate + H(+)</text>
        <dbReference type="Rhea" id="RHEA:42580"/>
        <dbReference type="Rhea" id="RHEA-COMP:9742"/>
        <dbReference type="Rhea" id="RHEA-COMP:10128"/>
        <dbReference type="ChEBI" id="CHEBI:15378"/>
        <dbReference type="ChEBI" id="CHEBI:30616"/>
        <dbReference type="ChEBI" id="CHEBI:33019"/>
        <dbReference type="ChEBI" id="CHEBI:33384"/>
        <dbReference type="ChEBI" id="CHEBI:78442"/>
        <dbReference type="ChEBI" id="CHEBI:78533"/>
        <dbReference type="ChEBI" id="CHEBI:456215"/>
        <dbReference type="EC" id="6.1.1.11"/>
    </reaction>
</comment>
<comment type="pathway">
    <text evidence="1">Aminoacyl-tRNA biosynthesis; selenocysteinyl-tRNA(Sec) biosynthesis; L-seryl-tRNA(Sec) from L-serine and tRNA(Sec): step 1/1.</text>
</comment>
<comment type="subunit">
    <text evidence="1">Homodimer. The tRNA molecule binds across the dimer.</text>
</comment>
<comment type="subcellular location">
    <subcellularLocation>
        <location evidence="1">Cytoplasm</location>
    </subcellularLocation>
</comment>
<comment type="domain">
    <text evidence="1">Consists of two distinct domains, a catalytic core and a N-terminal extension that is involved in tRNA binding.</text>
</comment>
<comment type="similarity">
    <text evidence="1">Belongs to the class-II aminoacyl-tRNA synthetase family. Type-1 seryl-tRNA synthetase subfamily.</text>
</comment>
<dbReference type="EC" id="6.1.1.11" evidence="1"/>
<dbReference type="EMBL" id="CP000233">
    <property type="protein sequence ID" value="ABD99004.1"/>
    <property type="molecule type" value="Genomic_DNA"/>
</dbReference>
<dbReference type="RefSeq" id="WP_003702338.1">
    <property type="nucleotide sequence ID" value="NC_007929.1"/>
</dbReference>
<dbReference type="RefSeq" id="YP_535087.1">
    <property type="nucleotide sequence ID" value="NC_007929.1"/>
</dbReference>
<dbReference type="SMR" id="Q1WVB3"/>
<dbReference type="STRING" id="362948.LSL_0189"/>
<dbReference type="KEGG" id="lsl:LSL_0189"/>
<dbReference type="PATRIC" id="fig|362948.14.peg.266"/>
<dbReference type="HOGENOM" id="CLU_023797_1_1_9"/>
<dbReference type="OrthoDB" id="9804647at2"/>
<dbReference type="UniPathway" id="UPA00906">
    <property type="reaction ID" value="UER00895"/>
</dbReference>
<dbReference type="Proteomes" id="UP000006559">
    <property type="component" value="Chromosome"/>
</dbReference>
<dbReference type="GO" id="GO:0005737">
    <property type="term" value="C:cytoplasm"/>
    <property type="evidence" value="ECO:0007669"/>
    <property type="project" value="UniProtKB-SubCell"/>
</dbReference>
<dbReference type="GO" id="GO:0005524">
    <property type="term" value="F:ATP binding"/>
    <property type="evidence" value="ECO:0007669"/>
    <property type="project" value="UniProtKB-UniRule"/>
</dbReference>
<dbReference type="GO" id="GO:0140096">
    <property type="term" value="F:catalytic activity, acting on a protein"/>
    <property type="evidence" value="ECO:0007669"/>
    <property type="project" value="UniProtKB-ARBA"/>
</dbReference>
<dbReference type="GO" id="GO:0004828">
    <property type="term" value="F:serine-tRNA ligase activity"/>
    <property type="evidence" value="ECO:0007669"/>
    <property type="project" value="UniProtKB-UniRule"/>
</dbReference>
<dbReference type="GO" id="GO:0016740">
    <property type="term" value="F:transferase activity"/>
    <property type="evidence" value="ECO:0007669"/>
    <property type="project" value="UniProtKB-ARBA"/>
</dbReference>
<dbReference type="GO" id="GO:0016260">
    <property type="term" value="P:selenocysteine biosynthetic process"/>
    <property type="evidence" value="ECO:0007669"/>
    <property type="project" value="UniProtKB-UniRule"/>
</dbReference>
<dbReference type="GO" id="GO:0006434">
    <property type="term" value="P:seryl-tRNA aminoacylation"/>
    <property type="evidence" value="ECO:0007669"/>
    <property type="project" value="UniProtKB-UniRule"/>
</dbReference>
<dbReference type="CDD" id="cd00770">
    <property type="entry name" value="SerRS_core"/>
    <property type="match status" value="1"/>
</dbReference>
<dbReference type="Gene3D" id="3.30.930.10">
    <property type="entry name" value="Bira Bifunctional Protein, Domain 2"/>
    <property type="match status" value="1"/>
</dbReference>
<dbReference type="Gene3D" id="1.10.287.40">
    <property type="entry name" value="Serine-tRNA synthetase, tRNA binding domain"/>
    <property type="match status" value="1"/>
</dbReference>
<dbReference type="HAMAP" id="MF_00176">
    <property type="entry name" value="Ser_tRNA_synth_type1"/>
    <property type="match status" value="1"/>
</dbReference>
<dbReference type="InterPro" id="IPR002314">
    <property type="entry name" value="aa-tRNA-synt_IIb"/>
</dbReference>
<dbReference type="InterPro" id="IPR006195">
    <property type="entry name" value="aa-tRNA-synth_II"/>
</dbReference>
<dbReference type="InterPro" id="IPR045864">
    <property type="entry name" value="aa-tRNA-synth_II/BPL/LPL"/>
</dbReference>
<dbReference type="InterPro" id="IPR002317">
    <property type="entry name" value="Ser-tRNA-ligase_type_1"/>
</dbReference>
<dbReference type="InterPro" id="IPR015866">
    <property type="entry name" value="Ser-tRNA-synth_1_N"/>
</dbReference>
<dbReference type="InterPro" id="IPR042103">
    <property type="entry name" value="SerRS_1_N_sf"/>
</dbReference>
<dbReference type="InterPro" id="IPR033729">
    <property type="entry name" value="SerRS_core"/>
</dbReference>
<dbReference type="InterPro" id="IPR010978">
    <property type="entry name" value="tRNA-bd_arm"/>
</dbReference>
<dbReference type="NCBIfam" id="TIGR00414">
    <property type="entry name" value="serS"/>
    <property type="match status" value="1"/>
</dbReference>
<dbReference type="PANTHER" id="PTHR43697:SF1">
    <property type="entry name" value="SERINE--TRNA LIGASE"/>
    <property type="match status" value="1"/>
</dbReference>
<dbReference type="PANTHER" id="PTHR43697">
    <property type="entry name" value="SERYL-TRNA SYNTHETASE"/>
    <property type="match status" value="1"/>
</dbReference>
<dbReference type="Pfam" id="PF02403">
    <property type="entry name" value="Seryl_tRNA_N"/>
    <property type="match status" value="1"/>
</dbReference>
<dbReference type="Pfam" id="PF00587">
    <property type="entry name" value="tRNA-synt_2b"/>
    <property type="match status" value="1"/>
</dbReference>
<dbReference type="PIRSF" id="PIRSF001529">
    <property type="entry name" value="Ser-tRNA-synth_IIa"/>
    <property type="match status" value="1"/>
</dbReference>
<dbReference type="PRINTS" id="PR00981">
    <property type="entry name" value="TRNASYNTHSER"/>
</dbReference>
<dbReference type="SUPFAM" id="SSF55681">
    <property type="entry name" value="Class II aaRS and biotin synthetases"/>
    <property type="match status" value="1"/>
</dbReference>
<dbReference type="SUPFAM" id="SSF46589">
    <property type="entry name" value="tRNA-binding arm"/>
    <property type="match status" value="1"/>
</dbReference>
<dbReference type="PROSITE" id="PS50862">
    <property type="entry name" value="AA_TRNA_LIGASE_II"/>
    <property type="match status" value="1"/>
</dbReference>
<reference key="1">
    <citation type="journal article" date="2006" name="Proc. Natl. Acad. Sci. U.S.A.">
        <title>Multireplicon genome architecture of Lactobacillus salivarius.</title>
        <authorList>
            <person name="Claesson M.J."/>
            <person name="Li Y."/>
            <person name="Leahy S."/>
            <person name="Canchaya C."/>
            <person name="van Pijkeren J.P."/>
            <person name="Cerdeno-Tarraga A.M."/>
            <person name="Parkhill J."/>
            <person name="Flynn S."/>
            <person name="O'Sullivan G.C."/>
            <person name="Collins J.K."/>
            <person name="Higgins D."/>
            <person name="Shanahan F."/>
            <person name="Fitzgerald G.F."/>
            <person name="van Sinderen D."/>
            <person name="O'Toole P.W."/>
        </authorList>
    </citation>
    <scope>NUCLEOTIDE SEQUENCE [LARGE SCALE GENOMIC DNA]</scope>
    <source>
        <strain>UCC118</strain>
    </source>
</reference>
<organism>
    <name type="scientific">Ligilactobacillus salivarius (strain UCC118)</name>
    <name type="common">Lactobacillus salivarius</name>
    <dbReference type="NCBI Taxonomy" id="362948"/>
    <lineage>
        <taxon>Bacteria</taxon>
        <taxon>Bacillati</taxon>
        <taxon>Bacillota</taxon>
        <taxon>Bacilli</taxon>
        <taxon>Lactobacillales</taxon>
        <taxon>Lactobacillaceae</taxon>
        <taxon>Ligilactobacillus</taxon>
    </lineage>
</organism>
<sequence length="425" mass="48368">MLDIKDIRLNTEEYKRRLGTRGVKPEEIDELVAEDKKRRELLVETENLKKERNEVSEAIAQAKRNKEDASEQIQAMRKVGTKIKELDEKLAKVEENVKSMAAHLPNLPNPTIPVGPDEDSNVELYKVGTPRKFDFEPKAHWDIGEDLGILDFDRAAKVSGARFVFYKGLGAKLERAVYNFMLDEHAKEGYTEVIPPYIVKSKSMYGTGQFPKFKDQVYQVNGEDMTLIPTAEVPLTNYYREEVIPTEDLPVYFTALSPSFRSEAGSAGRDTRGLIRMHQFNKVEMVKYTKPEDSYNELEKMTKNAGNIMEKLGLPYHVITLSTGDMGFSAAMTHDLEVWMPAQDTYREISSCSNCEDFQARRARIQYRDENGKLQYVHTLNGSGLAVGRTVAAILENYQNEDGSVTIPEALRPYMQGLEVIKKEK</sequence>
<accession>Q1WVB3</accession>
<evidence type="ECO:0000255" key="1">
    <source>
        <dbReference type="HAMAP-Rule" id="MF_00176"/>
    </source>
</evidence>
<proteinExistence type="inferred from homology"/>
<keyword id="KW-0030">Aminoacyl-tRNA synthetase</keyword>
<keyword id="KW-0067">ATP-binding</keyword>
<keyword id="KW-0963">Cytoplasm</keyword>
<keyword id="KW-0436">Ligase</keyword>
<keyword id="KW-0547">Nucleotide-binding</keyword>
<keyword id="KW-0648">Protein biosynthesis</keyword>
<keyword id="KW-1185">Reference proteome</keyword>